<keyword id="KW-0256">Endoplasmic reticulum</keyword>
<keyword id="KW-0931">ER-Golgi transport</keyword>
<keyword id="KW-0333">Golgi apparatus</keyword>
<keyword id="KW-0472">Membrane</keyword>
<keyword id="KW-0653">Protein transport</keyword>
<keyword id="KW-1185">Reference proteome</keyword>
<keyword id="KW-0812">Transmembrane</keyword>
<keyword id="KW-1133">Transmembrane helix</keyword>
<keyword id="KW-0813">Transport</keyword>
<evidence type="ECO:0000250" key="1"/>
<evidence type="ECO:0000250" key="2">
    <source>
        <dbReference type="UniProtKB" id="Q969M3"/>
    </source>
</evidence>
<evidence type="ECO:0000250" key="3">
    <source>
        <dbReference type="UniProtKB" id="Q9EQQ2"/>
    </source>
</evidence>
<evidence type="ECO:0000255" key="4"/>
<evidence type="ECO:0000305" key="5"/>
<comment type="function">
    <text evidence="1">Plays a role in transport between endoplasmic reticulum and Golgi.</text>
</comment>
<comment type="subcellular location">
    <subcellularLocation>
        <location evidence="3">Endoplasmic reticulum membrane</location>
        <topology>Multi-pass membrane protein</topology>
    </subcellularLocation>
    <subcellularLocation>
        <location evidence="2">Golgi apparatus</location>
        <location evidence="2">cis-Golgi network membrane</location>
        <topology>Multi-pass membrane protein</topology>
    </subcellularLocation>
</comment>
<comment type="similarity">
    <text evidence="5">Belongs to the YIP1 family.</text>
</comment>
<organism>
    <name type="scientific">Xenopus laevis</name>
    <name type="common">African clawed frog</name>
    <dbReference type="NCBI Taxonomy" id="8355"/>
    <lineage>
        <taxon>Eukaryota</taxon>
        <taxon>Metazoa</taxon>
        <taxon>Chordata</taxon>
        <taxon>Craniata</taxon>
        <taxon>Vertebrata</taxon>
        <taxon>Euteleostomi</taxon>
        <taxon>Amphibia</taxon>
        <taxon>Batrachia</taxon>
        <taxon>Anura</taxon>
        <taxon>Pipoidea</taxon>
        <taxon>Pipidae</taxon>
        <taxon>Xenopodinae</taxon>
        <taxon>Xenopus</taxon>
        <taxon>Xenopus</taxon>
    </lineage>
</organism>
<feature type="chain" id="PRO_0000234334" description="Protein YIPF5">
    <location>
        <begin position="1"/>
        <end position="256"/>
    </location>
</feature>
<feature type="topological domain" description="Cytoplasmic" evidence="2">
    <location>
        <begin position="1"/>
        <end position="125"/>
    </location>
</feature>
<feature type="transmembrane region" description="Helical" evidence="4">
    <location>
        <begin position="126"/>
        <end position="146"/>
    </location>
</feature>
<feature type="topological domain" description="Lumenal" evidence="5">
    <location>
        <position position="147"/>
    </location>
</feature>
<feature type="transmembrane region" description="Helical" evidence="4">
    <location>
        <begin position="148"/>
        <end position="168"/>
    </location>
</feature>
<feature type="topological domain" description="Cytoplasmic" evidence="5">
    <location>
        <begin position="169"/>
        <end position="172"/>
    </location>
</feature>
<feature type="transmembrane region" description="Helical" evidence="4">
    <location>
        <begin position="173"/>
        <end position="193"/>
    </location>
</feature>
<feature type="topological domain" description="Lumenal" evidence="5">
    <location>
        <begin position="194"/>
        <end position="195"/>
    </location>
</feature>
<feature type="transmembrane region" description="Helical" evidence="4">
    <location>
        <begin position="196"/>
        <end position="216"/>
    </location>
</feature>
<feature type="topological domain" description="Cytoplasmic" evidence="5">
    <location>
        <begin position="217"/>
        <end position="235"/>
    </location>
</feature>
<feature type="transmembrane region" description="Helical" evidence="4">
    <location>
        <begin position="236"/>
        <end position="256"/>
    </location>
</feature>
<accession>Q7SXS2</accession>
<gene>
    <name type="primary">yipf5</name>
</gene>
<reference key="1">
    <citation type="submission" date="2003-07" db="EMBL/GenBank/DDBJ databases">
        <authorList>
            <consortium name="NIH - Xenopus Gene Collection (XGC) project"/>
        </authorList>
    </citation>
    <scope>NUCLEOTIDE SEQUENCE [LARGE SCALE MRNA]</scope>
</reference>
<sequence>MSNFDNFNTDFYQTSYSIDDQSQGYNYNAGGAQYSKQYPYDPYSQQGGFILQEMNQQQQPYTGQIYQPTQTYTPTATESVYGSTFDDEPPLLEELGINFDHIWQKTLTVLHPLKVADGSIMNETDLAGPMVFCLAFGATLLLAGKIQFGYVYGISAMGCLGMYCLLNLMSMTGVSFGCVSSVLGYCLLPMIILSTFAVIFSLQGILGIVLAALIIGWCSFSASKIFISALAMDGQQLLVAYPCALLYGVFALISVF</sequence>
<protein>
    <recommendedName>
        <fullName>Protein YIPF5</fullName>
    </recommendedName>
    <alternativeName>
        <fullName>YIP1 family member 5</fullName>
    </alternativeName>
</protein>
<name>YIPF5_XENLA</name>
<dbReference type="EMBL" id="BC055267">
    <property type="protein sequence ID" value="AAH55267.1"/>
    <property type="molecule type" value="mRNA"/>
</dbReference>
<dbReference type="RefSeq" id="NP_001080395.1">
    <property type="nucleotide sequence ID" value="NM_001086926.1"/>
</dbReference>
<dbReference type="DNASU" id="380087"/>
<dbReference type="GeneID" id="380087"/>
<dbReference type="KEGG" id="xla:380087"/>
<dbReference type="AGR" id="Xenbase:XB-GENE-977468"/>
<dbReference type="CTD" id="380087"/>
<dbReference type="Xenbase" id="XB-GENE-977468">
    <property type="gene designation" value="yipf5.S"/>
</dbReference>
<dbReference type="OrthoDB" id="440385at2759"/>
<dbReference type="Proteomes" id="UP000186698">
    <property type="component" value="Chromosome 3S"/>
</dbReference>
<dbReference type="Bgee" id="380087">
    <property type="expression patterns" value="Expressed in pancreas and 19 other cell types or tissues"/>
</dbReference>
<dbReference type="GO" id="GO:0005789">
    <property type="term" value="C:endoplasmic reticulum membrane"/>
    <property type="evidence" value="ECO:0007669"/>
    <property type="project" value="UniProtKB-SubCell"/>
</dbReference>
<dbReference type="GO" id="GO:0005802">
    <property type="term" value="C:trans-Golgi network"/>
    <property type="evidence" value="ECO:0000318"/>
    <property type="project" value="GO_Central"/>
</dbReference>
<dbReference type="GO" id="GO:0006888">
    <property type="term" value="P:endoplasmic reticulum to Golgi vesicle-mediated transport"/>
    <property type="evidence" value="ECO:0000318"/>
    <property type="project" value="GO_Central"/>
</dbReference>
<dbReference type="GO" id="GO:0015031">
    <property type="term" value="P:protein transport"/>
    <property type="evidence" value="ECO:0007669"/>
    <property type="project" value="UniProtKB-KW"/>
</dbReference>
<dbReference type="GO" id="GO:0060628">
    <property type="term" value="P:regulation of ER to Golgi vesicle-mediated transport"/>
    <property type="evidence" value="ECO:0000318"/>
    <property type="project" value="GO_Central"/>
</dbReference>
<dbReference type="GO" id="GO:0048280">
    <property type="term" value="P:vesicle fusion with Golgi apparatus"/>
    <property type="evidence" value="ECO:0000318"/>
    <property type="project" value="GO_Central"/>
</dbReference>
<dbReference type="InterPro" id="IPR045231">
    <property type="entry name" value="Yip1/4-like"/>
</dbReference>
<dbReference type="InterPro" id="IPR006977">
    <property type="entry name" value="Yip1_dom"/>
</dbReference>
<dbReference type="PANTHER" id="PTHR21236">
    <property type="entry name" value="GOLGI MEMBRANE PROTEIN YIP1"/>
    <property type="match status" value="1"/>
</dbReference>
<dbReference type="PANTHER" id="PTHR21236:SF6">
    <property type="entry name" value="PROTEIN YIPF5"/>
    <property type="match status" value="1"/>
</dbReference>
<dbReference type="Pfam" id="PF04893">
    <property type="entry name" value="Yip1"/>
    <property type="match status" value="1"/>
</dbReference>
<proteinExistence type="evidence at transcript level"/>